<gene>
    <name type="primary">M</name>
</gene>
<protein>
    <recommendedName>
        <fullName>Matrix protein</fullName>
    </recommendedName>
</protein>
<keyword id="KW-0053">Apoptosis</keyword>
<keyword id="KW-1035">Host cytoplasm</keyword>
<keyword id="KW-1043">Host membrane</keyword>
<keyword id="KW-1048">Host nucleus</keyword>
<keyword id="KW-0945">Host-virus interaction</keyword>
<keyword id="KW-0472">Membrane</keyword>
<keyword id="KW-0597">Phosphoprotein</keyword>
<keyword id="KW-1198">Viral budding</keyword>
<keyword id="KW-1187">Viral budding via the host ESCRT complexes</keyword>
<keyword id="KW-0468">Viral matrix protein</keyword>
<keyword id="KW-1188">Viral release from host cell</keyword>
<keyword id="KW-0946">Virion</keyword>
<name>MATRX_PIRYV</name>
<proteinExistence type="inferred from homology"/>
<feature type="chain" id="PRO_0000287256" description="Matrix protein">
    <location>
        <begin position="1"/>
        <end position="229"/>
    </location>
</feature>
<feature type="region of interest" description="Disordered" evidence="3">
    <location>
        <begin position="11"/>
        <end position="36"/>
    </location>
</feature>
<feature type="short sequence motif" description="dynamin binding" evidence="1">
    <location>
        <begin position="2"/>
        <end position="4"/>
    </location>
</feature>
<feature type="short sequence motif" description="PPXY motif" evidence="1">
    <location>
        <begin position="33"/>
        <end position="36"/>
    </location>
</feature>
<feature type="short sequence motif" description="PTAP/PSAP motif" evidence="1">
    <location>
        <begin position="42"/>
        <end position="45"/>
    </location>
</feature>
<feature type="compositionally biased region" description="Basic residues" evidence="3">
    <location>
        <begin position="13"/>
        <end position="23"/>
    </location>
</feature>
<accession>Q85212</accession>
<organism>
    <name type="scientific">Piry virus</name>
    <name type="common">PIRYV</name>
    <dbReference type="NCBI Taxonomy" id="11274"/>
    <lineage>
        <taxon>Viruses</taxon>
        <taxon>Riboviria</taxon>
        <taxon>Orthornavirae</taxon>
        <taxon>Negarnaviricota</taxon>
        <taxon>Haploviricotina</taxon>
        <taxon>Monjiviricetes</taxon>
        <taxon>Mononegavirales</taxon>
        <taxon>Rhabdoviridae</taxon>
        <taxon>Alpharhabdovirinae</taxon>
        <taxon>Vesiculovirus</taxon>
        <taxon>Vesiculovirus piry</taxon>
    </lineage>
</organism>
<sequence length="229" mass="26344">MKSIRQLLSLAKKEKKREKKSNHGSHSMEWESPPSYNEIKSPSAPIFGYDYEDMEYLPTLGVQTLKLQYKCVLQVRSESPFTSYLDAVDNVANWEKQYNGFSGKKPFYRAVMVRAVQAMKANPMSLQDGRSPEYTSEIEGRCLVFHSLGHIPPMMYMCEQFTRDWSGRRNQGIVNVKIWVGVTDTLDNLDQIFDPKKHFSEEEMLSAATILGLEVKKSSDNNYIISKSY</sequence>
<evidence type="ECO:0000250" key="1">
    <source>
        <dbReference type="UniProtKB" id="P03519"/>
    </source>
</evidence>
<evidence type="ECO:0000250" key="2">
    <source>
        <dbReference type="UniProtKB" id="P08325"/>
    </source>
</evidence>
<evidence type="ECO:0000256" key="3">
    <source>
        <dbReference type="SAM" id="MobiDB-lite"/>
    </source>
</evidence>
<evidence type="ECO:0000305" key="4"/>
<dbReference type="EMBL" id="D26175">
    <property type="protein sequence ID" value="BAA05162.1"/>
    <property type="molecule type" value="Genomic_RNA"/>
</dbReference>
<dbReference type="SMR" id="Q85212"/>
<dbReference type="GO" id="GO:0030430">
    <property type="term" value="C:host cell cytoplasm"/>
    <property type="evidence" value="ECO:0007669"/>
    <property type="project" value="UniProtKB-SubCell"/>
</dbReference>
<dbReference type="GO" id="GO:0044200">
    <property type="term" value="C:host cell nuclear membrane"/>
    <property type="evidence" value="ECO:0007669"/>
    <property type="project" value="UniProtKB-SubCell"/>
</dbReference>
<dbReference type="GO" id="GO:0016020">
    <property type="term" value="C:membrane"/>
    <property type="evidence" value="ECO:0007669"/>
    <property type="project" value="UniProtKB-KW"/>
</dbReference>
<dbReference type="GO" id="GO:0019031">
    <property type="term" value="C:viral envelope"/>
    <property type="evidence" value="ECO:0007669"/>
    <property type="project" value="InterPro"/>
</dbReference>
<dbReference type="GO" id="GO:0039660">
    <property type="term" value="F:structural constituent of virion"/>
    <property type="evidence" value="ECO:0007669"/>
    <property type="project" value="UniProtKB-KW"/>
</dbReference>
<dbReference type="GO" id="GO:0039702">
    <property type="term" value="P:viral budding via host ESCRT complex"/>
    <property type="evidence" value="ECO:0007669"/>
    <property type="project" value="UniProtKB-KW"/>
</dbReference>
<dbReference type="Gene3D" id="3.10.460.10">
    <property type="entry name" value="VSV matrix protein"/>
    <property type="match status" value="1"/>
</dbReference>
<dbReference type="InterPro" id="IPR009397">
    <property type="entry name" value="Vesiculo_matrix"/>
</dbReference>
<dbReference type="InterPro" id="IPR036711">
    <property type="entry name" value="VSV_matrix_sf"/>
</dbReference>
<dbReference type="Pfam" id="PF06326">
    <property type="entry name" value="Vesiculo_matrix"/>
    <property type="match status" value="1"/>
</dbReference>
<dbReference type="SUPFAM" id="SSF75404">
    <property type="entry name" value="VSV matrix protein"/>
    <property type="match status" value="1"/>
</dbReference>
<reference key="1">
    <citation type="journal article" date="1992" name="Nucleic Acids Res.">
        <title>The phosphoprotein (P) gene of the rhabdovirus Piry: its cloning, sequencing, and expression in Escherichia coli.</title>
        <authorList>
            <person name="Barik S."/>
        </authorList>
    </citation>
    <scope>NUCLEOTIDE SEQUENCE [GENOMIC RNA]</scope>
</reference>
<reference key="2">
    <citation type="journal article" date="1995" name="Intervirology">
        <title>The relationship of Piry virus to other vesiculoviruses: a re-evaluation based on the glycoprotein gene sequence.</title>
        <authorList>
            <person name="Brun G."/>
            <person name="Bao X."/>
            <person name="Prevec L."/>
        </authorList>
    </citation>
    <scope>NUCLEOTIDE SEQUENCE [GENOMIC RNA]</scope>
</reference>
<comment type="function">
    <text evidence="1">Forms a double layer around the helical nucleocapsid, the inner matrix layer binding to the N helix and the outer matrix layer binding to the envelope glycoprotein. Plays a major role in assembly and budding of virion, by recruiting cellular partners of the ESCRT complexes that play a key role in releasing the budding particle from the host membrane. Condensates the ribonucleocapsid core during virus assembly. Inhibits the host mRNA nuclear export thereby inducing the shut off of cellular transcription and preventing the interferon signaling and the establishment of antiviral state in infected cells. This shutoff presumably inhibits interferon signaling and thus establishment of antiviral state in virus infected cells. Induces cell-rounding, cytoskeleton disorganization and apoptosis in infected cell. Inhibits host transcription, possibly through interaction with host DNA repair factor IIH/TFIIH GTF2H5 subunit.</text>
</comment>
<comment type="subunit">
    <text evidence="1 2">Homomultimer. Interacts with viral nucleocapsid; this interaction contributes to the virion assembly (By similarity). Interacts with the viral envelope glycoprotein; this interaction contributes to the virion assembly (By similarity). Interacts with host RAE1-NUP98 complex. Interacts with host NEDD4 and TSG101. Interacts with host dynamin. Interacts with host NDUFAF4; the interaction inhibits viral propagation and is independent of interferon activation. Interacts with host GTF2H5; the interaction may inhibit host transcription (By similarity).</text>
</comment>
<comment type="subcellular location">
    <subcellularLocation>
        <location evidence="1">Virion</location>
    </subcellularLocation>
    <subcellularLocation>
        <location evidence="1">Host endomembrane system</location>
        <topology evidence="1">Peripheral membrane protein</topology>
    </subcellularLocation>
    <subcellularLocation>
        <location evidence="1">Host nucleus membrane</location>
        <topology evidence="1">Peripheral membrane protein</topology>
    </subcellularLocation>
    <subcellularLocation>
        <location evidence="1">Host nucleus</location>
    </subcellularLocation>
    <subcellularLocation>
        <location evidence="1">Host cytoplasm</location>
    </subcellularLocation>
    <text evidence="1">In the virion, forms a double layer around the helical nucleocapsid, the inner matrix layer binding to the N helix and the outer matrix layer binding to the envelope glycoprotein. About 2480 copies of M are present in the virion.</text>
</comment>
<comment type="domain">
    <text evidence="1">Late-budding domains (L domains) are short sequence motifs essential for viral particle budding. They recruit proteins of the host ESCRT machinery (Endosomal Sorting Complex Required for Transport) or ESCRT-associated proteins. M contains two overlapping L domains: a PPXY motif which interacts with the WW domain 3 of NEDD4 and a PTAP/PSAP motif, which interacts with the UEV domain of TSG101.</text>
</comment>
<comment type="PTM">
    <text evidence="1">Phosphorylated by host.</text>
</comment>
<comment type="similarity">
    <text evidence="4">Belongs to the vesiculoviruses matrix protein family.</text>
</comment>
<organismHost>
    <name type="scientific">Gracilinanus microtarsus</name>
    <name type="common">Brazilian gracile mouse opossum</name>
    <dbReference type="NCBI Taxonomy" id="126289"/>
</organismHost>